<reference key="1">
    <citation type="submission" date="2005-08" db="EMBL/GenBank/DDBJ databases">
        <title>Complete sequence of chromosome 1 of Nitrosospira multiformis ATCC 25196.</title>
        <authorList>
            <person name="Copeland A."/>
            <person name="Lucas S."/>
            <person name="Lapidus A."/>
            <person name="Barry K."/>
            <person name="Detter J.C."/>
            <person name="Glavina T."/>
            <person name="Hammon N."/>
            <person name="Israni S."/>
            <person name="Pitluck S."/>
            <person name="Chain P."/>
            <person name="Malfatti S."/>
            <person name="Shin M."/>
            <person name="Vergez L."/>
            <person name="Schmutz J."/>
            <person name="Larimer F."/>
            <person name="Land M."/>
            <person name="Hauser L."/>
            <person name="Kyrpides N."/>
            <person name="Lykidis A."/>
            <person name="Richardson P."/>
        </authorList>
    </citation>
    <scope>NUCLEOTIDE SEQUENCE [LARGE SCALE GENOMIC DNA]</scope>
    <source>
        <strain>ATCC 25196 / NCIMB 11849 / C 71</strain>
    </source>
</reference>
<dbReference type="EC" id="2.4.99.28" evidence="1"/>
<dbReference type="EMBL" id="CP000103">
    <property type="protein sequence ID" value="ABB73847.1"/>
    <property type="molecule type" value="Genomic_DNA"/>
</dbReference>
<dbReference type="RefSeq" id="WP_011379901.1">
    <property type="nucleotide sequence ID" value="NC_007614.1"/>
</dbReference>
<dbReference type="SMR" id="Q2YBM4"/>
<dbReference type="STRING" id="323848.Nmul_A0539"/>
<dbReference type="CAZy" id="GT51">
    <property type="family name" value="Glycosyltransferase Family 51"/>
</dbReference>
<dbReference type="KEGG" id="nmu:Nmul_A0539"/>
<dbReference type="eggNOG" id="COG0744">
    <property type="taxonomic scope" value="Bacteria"/>
</dbReference>
<dbReference type="HOGENOM" id="CLU_006354_1_0_4"/>
<dbReference type="OrthoDB" id="9766909at2"/>
<dbReference type="UniPathway" id="UPA00219"/>
<dbReference type="Proteomes" id="UP000002718">
    <property type="component" value="Chromosome"/>
</dbReference>
<dbReference type="GO" id="GO:0009274">
    <property type="term" value="C:peptidoglycan-based cell wall"/>
    <property type="evidence" value="ECO:0007669"/>
    <property type="project" value="InterPro"/>
</dbReference>
<dbReference type="GO" id="GO:0005886">
    <property type="term" value="C:plasma membrane"/>
    <property type="evidence" value="ECO:0007669"/>
    <property type="project" value="UniProtKB-SubCell"/>
</dbReference>
<dbReference type="GO" id="GO:0016763">
    <property type="term" value="F:pentosyltransferase activity"/>
    <property type="evidence" value="ECO:0007669"/>
    <property type="project" value="InterPro"/>
</dbReference>
<dbReference type="GO" id="GO:0008955">
    <property type="term" value="F:peptidoglycan glycosyltransferase activity"/>
    <property type="evidence" value="ECO:0007669"/>
    <property type="project" value="UniProtKB-UniRule"/>
</dbReference>
<dbReference type="GO" id="GO:0071555">
    <property type="term" value="P:cell wall organization"/>
    <property type="evidence" value="ECO:0007669"/>
    <property type="project" value="UniProtKB-KW"/>
</dbReference>
<dbReference type="GO" id="GO:0009252">
    <property type="term" value="P:peptidoglycan biosynthetic process"/>
    <property type="evidence" value="ECO:0007669"/>
    <property type="project" value="UniProtKB-UniRule"/>
</dbReference>
<dbReference type="GO" id="GO:0008360">
    <property type="term" value="P:regulation of cell shape"/>
    <property type="evidence" value="ECO:0007669"/>
    <property type="project" value="UniProtKB-KW"/>
</dbReference>
<dbReference type="Gene3D" id="1.10.3810.10">
    <property type="entry name" value="Biosynthetic peptidoglycan transglycosylase-like"/>
    <property type="match status" value="1"/>
</dbReference>
<dbReference type="HAMAP" id="MF_00766">
    <property type="entry name" value="PGT_MtgA"/>
    <property type="match status" value="1"/>
</dbReference>
<dbReference type="InterPro" id="IPR001264">
    <property type="entry name" value="Glyco_trans_51"/>
</dbReference>
<dbReference type="InterPro" id="IPR023346">
    <property type="entry name" value="Lysozyme-like_dom_sf"/>
</dbReference>
<dbReference type="InterPro" id="IPR036950">
    <property type="entry name" value="PBP_transglycosylase"/>
</dbReference>
<dbReference type="InterPro" id="IPR011812">
    <property type="entry name" value="Pep_trsgly"/>
</dbReference>
<dbReference type="NCBIfam" id="TIGR02070">
    <property type="entry name" value="mono_pep_trsgly"/>
    <property type="match status" value="1"/>
</dbReference>
<dbReference type="PANTHER" id="PTHR30400:SF0">
    <property type="entry name" value="BIOSYNTHETIC PEPTIDOGLYCAN TRANSGLYCOSYLASE"/>
    <property type="match status" value="1"/>
</dbReference>
<dbReference type="PANTHER" id="PTHR30400">
    <property type="entry name" value="MONOFUNCTIONAL BIOSYNTHETIC PEPTIDOGLYCAN TRANSGLYCOSYLASE"/>
    <property type="match status" value="1"/>
</dbReference>
<dbReference type="Pfam" id="PF00912">
    <property type="entry name" value="Transgly"/>
    <property type="match status" value="1"/>
</dbReference>
<dbReference type="SUPFAM" id="SSF53955">
    <property type="entry name" value="Lysozyme-like"/>
    <property type="match status" value="1"/>
</dbReference>
<sequence length="230" mass="27020">MFFKRWFWRIFLFFIAVIFVYQFWIFSQIVYWNYFNPSSSAFMQTRLETLREKNTKAALRTRWIPYEQISPHLKRAIIAAEDAKFLEHEGFDFDAIQKAYEKNLKKGRLIMGGSTISQQLAKNLFLSGDKTPWRKLQEAFITLMLEKVMSKRRILEIYLNVIEWGNVVFGAEAAARHYYGISASSVSREQAARLAAMVPSPRFYDENRNTPWLSKKTRMILGRMASASIP</sequence>
<name>MTGA_NITMU</name>
<organism>
    <name type="scientific">Nitrosospira multiformis (strain ATCC 25196 / NCIMB 11849 / C 71)</name>
    <dbReference type="NCBI Taxonomy" id="323848"/>
    <lineage>
        <taxon>Bacteria</taxon>
        <taxon>Pseudomonadati</taxon>
        <taxon>Pseudomonadota</taxon>
        <taxon>Betaproteobacteria</taxon>
        <taxon>Nitrosomonadales</taxon>
        <taxon>Nitrosomonadaceae</taxon>
        <taxon>Nitrosospira</taxon>
    </lineage>
</organism>
<protein>
    <recommendedName>
        <fullName evidence="1">Biosynthetic peptidoglycan transglycosylase</fullName>
        <ecNumber evidence="1">2.4.99.28</ecNumber>
    </recommendedName>
    <alternativeName>
        <fullName evidence="1">Glycan polymerase</fullName>
    </alternativeName>
    <alternativeName>
        <fullName evidence="1">Peptidoglycan glycosyltransferase MtgA</fullName>
        <shortName evidence="1">PGT</shortName>
    </alternativeName>
</protein>
<feature type="chain" id="PRO_0000257678" description="Biosynthetic peptidoglycan transglycosylase">
    <location>
        <begin position="1"/>
        <end position="230"/>
    </location>
</feature>
<feature type="transmembrane region" description="Helical" evidence="1">
    <location>
        <begin position="10"/>
        <end position="30"/>
    </location>
</feature>
<keyword id="KW-0997">Cell inner membrane</keyword>
<keyword id="KW-1003">Cell membrane</keyword>
<keyword id="KW-0133">Cell shape</keyword>
<keyword id="KW-0961">Cell wall biogenesis/degradation</keyword>
<keyword id="KW-0328">Glycosyltransferase</keyword>
<keyword id="KW-0472">Membrane</keyword>
<keyword id="KW-0573">Peptidoglycan synthesis</keyword>
<keyword id="KW-1185">Reference proteome</keyword>
<keyword id="KW-0808">Transferase</keyword>
<keyword id="KW-0812">Transmembrane</keyword>
<keyword id="KW-1133">Transmembrane helix</keyword>
<proteinExistence type="inferred from homology"/>
<comment type="function">
    <text evidence="1">Peptidoglycan polymerase that catalyzes glycan chain elongation from lipid-linked precursors.</text>
</comment>
<comment type="catalytic activity">
    <reaction evidence="1">
        <text>[GlcNAc-(1-&gt;4)-Mur2Ac(oyl-L-Ala-gamma-D-Glu-L-Lys-D-Ala-D-Ala)](n)-di-trans,octa-cis-undecaprenyl diphosphate + beta-D-GlcNAc-(1-&gt;4)-Mur2Ac(oyl-L-Ala-gamma-D-Glu-L-Lys-D-Ala-D-Ala)-di-trans,octa-cis-undecaprenyl diphosphate = [GlcNAc-(1-&gt;4)-Mur2Ac(oyl-L-Ala-gamma-D-Glu-L-Lys-D-Ala-D-Ala)](n+1)-di-trans,octa-cis-undecaprenyl diphosphate + di-trans,octa-cis-undecaprenyl diphosphate + H(+)</text>
        <dbReference type="Rhea" id="RHEA:23708"/>
        <dbReference type="Rhea" id="RHEA-COMP:9602"/>
        <dbReference type="Rhea" id="RHEA-COMP:9603"/>
        <dbReference type="ChEBI" id="CHEBI:15378"/>
        <dbReference type="ChEBI" id="CHEBI:58405"/>
        <dbReference type="ChEBI" id="CHEBI:60033"/>
        <dbReference type="ChEBI" id="CHEBI:78435"/>
        <dbReference type="EC" id="2.4.99.28"/>
    </reaction>
</comment>
<comment type="pathway">
    <text evidence="1">Cell wall biogenesis; peptidoglycan biosynthesis.</text>
</comment>
<comment type="subcellular location">
    <subcellularLocation>
        <location evidence="1">Cell inner membrane</location>
        <topology evidence="1">Single-pass membrane protein</topology>
    </subcellularLocation>
</comment>
<comment type="similarity">
    <text evidence="1">Belongs to the glycosyltransferase 51 family.</text>
</comment>
<evidence type="ECO:0000255" key="1">
    <source>
        <dbReference type="HAMAP-Rule" id="MF_00766"/>
    </source>
</evidence>
<accession>Q2YBM4</accession>
<gene>
    <name evidence="1" type="primary">mtgA</name>
    <name type="ordered locus">Nmul_A0539</name>
</gene>